<protein>
    <recommendedName>
        <fullName>CDP-diacylglycerol pyrophosphatase</fullName>
        <ecNumber>3.6.1.26</ecNumber>
    </recommendedName>
    <alternativeName>
        <fullName>CDP-diacylglycerol phosphatidylhydrolase</fullName>
    </alternativeName>
    <alternativeName>
        <fullName>CDP-diglyceride hydrolase</fullName>
    </alternativeName>
</protein>
<evidence type="ECO:0000250" key="1"/>
<evidence type="ECO:0000255" key="2"/>
<evidence type="ECO:0000305" key="3"/>
<keyword id="KW-0997">Cell inner membrane</keyword>
<keyword id="KW-1003">Cell membrane</keyword>
<keyword id="KW-0378">Hydrolase</keyword>
<keyword id="KW-0444">Lipid biosynthesis</keyword>
<keyword id="KW-0443">Lipid metabolism</keyword>
<keyword id="KW-0472">Membrane</keyword>
<keyword id="KW-0594">Phospholipid biosynthesis</keyword>
<keyword id="KW-1208">Phospholipid metabolism</keyword>
<keyword id="KW-0812">Transmembrane</keyword>
<keyword id="KW-1133">Transmembrane helix</keyword>
<sequence>MKKAGFLFLAAMAIIVVSLNAKDPNVLRKIVFEKCLPNYEKNQNPSPCIEVKPDAGYVVLKDINGPLQYLLMPTTHISGIENPLLLDPSTPNFFYLSWQARDFMSKKYGKPIPDYAISLTINSKKGRSQNHFHIHISCISLDVRKQLDNNLKNINSRWSPLSGGLNGHKYLARRVTESELAQKSPFVMLAKEVPNAHKRMGDYGLAVVQQSDNSFVLLATQFNPLTLNRASAEEIQDHECAILR</sequence>
<dbReference type="EC" id="3.6.1.26"/>
<dbReference type="EMBL" id="AE001439">
    <property type="protein sequence ID" value="AAD06387.1"/>
    <property type="molecule type" value="Genomic_DNA"/>
</dbReference>
<dbReference type="PIR" id="B71885">
    <property type="entry name" value="B71885"/>
</dbReference>
<dbReference type="SMR" id="Q9ZKX9"/>
<dbReference type="KEGG" id="hpj:jhp_0805"/>
<dbReference type="PATRIC" id="fig|85963.30.peg.167"/>
<dbReference type="eggNOG" id="COG2134">
    <property type="taxonomic scope" value="Bacteria"/>
</dbReference>
<dbReference type="UniPathway" id="UPA00609">
    <property type="reaction ID" value="UER00664"/>
</dbReference>
<dbReference type="Proteomes" id="UP000000804">
    <property type="component" value="Chromosome"/>
</dbReference>
<dbReference type="GO" id="GO:0005886">
    <property type="term" value="C:plasma membrane"/>
    <property type="evidence" value="ECO:0007669"/>
    <property type="project" value="UniProtKB-SubCell"/>
</dbReference>
<dbReference type="GO" id="GO:0008715">
    <property type="term" value="F:CDP-diacylglycerol diphosphatase activity"/>
    <property type="evidence" value="ECO:0007669"/>
    <property type="project" value="UniProtKB-UniRule"/>
</dbReference>
<dbReference type="GO" id="GO:0046342">
    <property type="term" value="P:CDP-diacylglycerol catabolic process"/>
    <property type="evidence" value="ECO:0007669"/>
    <property type="project" value="UniProtKB-UniRule"/>
</dbReference>
<dbReference type="GO" id="GO:0008654">
    <property type="term" value="P:phospholipid biosynthetic process"/>
    <property type="evidence" value="ECO:0007669"/>
    <property type="project" value="UniProtKB-KW"/>
</dbReference>
<dbReference type="Gene3D" id="3.30.428.30">
    <property type="entry name" value="HIT family - CDH-like"/>
    <property type="match status" value="1"/>
</dbReference>
<dbReference type="HAMAP" id="MF_00319">
    <property type="entry name" value="Cdh"/>
    <property type="match status" value="1"/>
</dbReference>
<dbReference type="InterPro" id="IPR003763">
    <property type="entry name" value="CDP-diacylglyc_Pase"/>
</dbReference>
<dbReference type="InterPro" id="IPR015993">
    <property type="entry name" value="CDP-diacylglyc_Pase_proteobac"/>
</dbReference>
<dbReference type="InterPro" id="IPR036265">
    <property type="entry name" value="HIT-like_sf"/>
</dbReference>
<dbReference type="NCBIfam" id="TIGR00672">
    <property type="entry name" value="cdh"/>
    <property type="match status" value="1"/>
</dbReference>
<dbReference type="NCBIfam" id="NF003986">
    <property type="entry name" value="PRK05471.1-5"/>
    <property type="match status" value="1"/>
</dbReference>
<dbReference type="Pfam" id="PF02611">
    <property type="entry name" value="CDH"/>
    <property type="match status" value="1"/>
</dbReference>
<dbReference type="PIRSF" id="PIRSF001273">
    <property type="entry name" value="CDH"/>
    <property type="match status" value="1"/>
</dbReference>
<dbReference type="SUPFAM" id="SSF54197">
    <property type="entry name" value="HIT-like"/>
    <property type="match status" value="1"/>
</dbReference>
<name>CDH_HELPJ</name>
<accession>Q9ZKX9</accession>
<reference key="1">
    <citation type="journal article" date="1999" name="Nature">
        <title>Genomic sequence comparison of two unrelated isolates of the human gastric pathogen Helicobacter pylori.</title>
        <authorList>
            <person name="Alm R.A."/>
            <person name="Ling L.-S.L."/>
            <person name="Moir D.T."/>
            <person name="King B.L."/>
            <person name="Brown E.D."/>
            <person name="Doig P.C."/>
            <person name="Smith D.R."/>
            <person name="Noonan B."/>
            <person name="Guild B.C."/>
            <person name="deJonge B.L."/>
            <person name="Carmel G."/>
            <person name="Tummino P.J."/>
            <person name="Caruso A."/>
            <person name="Uria-Nickelsen M."/>
            <person name="Mills D.M."/>
            <person name="Ives C."/>
            <person name="Gibson R."/>
            <person name="Merberg D."/>
            <person name="Mills S.D."/>
            <person name="Jiang Q."/>
            <person name="Taylor D.E."/>
            <person name="Vovis G.F."/>
            <person name="Trust T.J."/>
        </authorList>
    </citation>
    <scope>NUCLEOTIDE SEQUENCE [LARGE SCALE GENOMIC DNA]</scope>
    <source>
        <strain>J99 / ATCC 700824</strain>
    </source>
</reference>
<comment type="catalytic activity">
    <reaction>
        <text>a CDP-1,2-diacyl-sn-glycerol + H2O = a 1,2-diacyl-sn-glycero-3-phosphate + CMP + 2 H(+)</text>
        <dbReference type="Rhea" id="RHEA:15221"/>
        <dbReference type="ChEBI" id="CHEBI:15377"/>
        <dbReference type="ChEBI" id="CHEBI:15378"/>
        <dbReference type="ChEBI" id="CHEBI:58332"/>
        <dbReference type="ChEBI" id="CHEBI:58608"/>
        <dbReference type="ChEBI" id="CHEBI:60377"/>
        <dbReference type="EC" id="3.6.1.26"/>
    </reaction>
</comment>
<comment type="pathway">
    <text>Phospholipid metabolism; CDP-diacylglycerol degradation; phosphatidate from CDP-diacylglycerol: step 1/1.</text>
</comment>
<comment type="subcellular location">
    <subcellularLocation>
        <location evidence="1">Cell inner membrane</location>
        <topology evidence="1">Single-pass membrane protein</topology>
    </subcellularLocation>
</comment>
<comment type="similarity">
    <text evidence="3">Belongs to the Cdh family.</text>
</comment>
<gene>
    <name type="primary">cdh</name>
    <name type="ordered locus">jhp_0805</name>
</gene>
<organism>
    <name type="scientific">Helicobacter pylori (strain J99 / ATCC 700824)</name>
    <name type="common">Campylobacter pylori J99</name>
    <dbReference type="NCBI Taxonomy" id="85963"/>
    <lineage>
        <taxon>Bacteria</taxon>
        <taxon>Pseudomonadati</taxon>
        <taxon>Campylobacterota</taxon>
        <taxon>Epsilonproteobacteria</taxon>
        <taxon>Campylobacterales</taxon>
        <taxon>Helicobacteraceae</taxon>
        <taxon>Helicobacter</taxon>
    </lineage>
</organism>
<proteinExistence type="inferred from homology"/>
<feature type="chain" id="PRO_0000198578" description="CDP-diacylglycerol pyrophosphatase">
    <location>
        <begin position="1"/>
        <end position="244"/>
    </location>
</feature>
<feature type="transmembrane region" description="Helical" evidence="2">
    <location>
        <begin position="7"/>
        <end position="23"/>
    </location>
</feature>